<name>GATC_NEIG2</name>
<protein>
    <recommendedName>
        <fullName evidence="1">Aspartyl/glutamyl-tRNA(Asn/Gln) amidotransferase subunit C</fullName>
        <shortName evidence="1">Asp/Glu-ADT subunit C</shortName>
        <ecNumber evidence="1">6.3.5.-</ecNumber>
    </recommendedName>
</protein>
<dbReference type="EC" id="6.3.5.-" evidence="1"/>
<dbReference type="EMBL" id="CP001050">
    <property type="protein sequence ID" value="ACF29920.1"/>
    <property type="molecule type" value="Genomic_DNA"/>
</dbReference>
<dbReference type="RefSeq" id="WP_003688831.1">
    <property type="nucleotide sequence ID" value="NC_011035.1"/>
</dbReference>
<dbReference type="SMR" id="B4RM84"/>
<dbReference type="GeneID" id="66753003"/>
<dbReference type="KEGG" id="ngk:NGK_1244"/>
<dbReference type="HOGENOM" id="CLU_105899_2_2_4"/>
<dbReference type="Proteomes" id="UP000002564">
    <property type="component" value="Chromosome"/>
</dbReference>
<dbReference type="GO" id="GO:0050566">
    <property type="term" value="F:asparaginyl-tRNA synthase (glutamine-hydrolyzing) activity"/>
    <property type="evidence" value="ECO:0007669"/>
    <property type="project" value="RHEA"/>
</dbReference>
<dbReference type="GO" id="GO:0005524">
    <property type="term" value="F:ATP binding"/>
    <property type="evidence" value="ECO:0007669"/>
    <property type="project" value="UniProtKB-KW"/>
</dbReference>
<dbReference type="GO" id="GO:0050567">
    <property type="term" value="F:glutaminyl-tRNA synthase (glutamine-hydrolyzing) activity"/>
    <property type="evidence" value="ECO:0007669"/>
    <property type="project" value="UniProtKB-UniRule"/>
</dbReference>
<dbReference type="GO" id="GO:0070681">
    <property type="term" value="P:glutaminyl-tRNAGln biosynthesis via transamidation"/>
    <property type="evidence" value="ECO:0007669"/>
    <property type="project" value="TreeGrafter"/>
</dbReference>
<dbReference type="GO" id="GO:0006450">
    <property type="term" value="P:regulation of translational fidelity"/>
    <property type="evidence" value="ECO:0007669"/>
    <property type="project" value="InterPro"/>
</dbReference>
<dbReference type="GO" id="GO:0006412">
    <property type="term" value="P:translation"/>
    <property type="evidence" value="ECO:0007669"/>
    <property type="project" value="UniProtKB-UniRule"/>
</dbReference>
<dbReference type="Gene3D" id="1.10.20.60">
    <property type="entry name" value="Glu-tRNAGln amidotransferase C subunit, N-terminal domain"/>
    <property type="match status" value="1"/>
</dbReference>
<dbReference type="HAMAP" id="MF_00122">
    <property type="entry name" value="GatC"/>
    <property type="match status" value="1"/>
</dbReference>
<dbReference type="InterPro" id="IPR036113">
    <property type="entry name" value="Asp/Glu-ADT_sf_sub_c"/>
</dbReference>
<dbReference type="InterPro" id="IPR003837">
    <property type="entry name" value="GatC"/>
</dbReference>
<dbReference type="NCBIfam" id="TIGR00135">
    <property type="entry name" value="gatC"/>
    <property type="match status" value="1"/>
</dbReference>
<dbReference type="PANTHER" id="PTHR15004">
    <property type="entry name" value="GLUTAMYL-TRNA(GLN) AMIDOTRANSFERASE SUBUNIT C, MITOCHONDRIAL"/>
    <property type="match status" value="1"/>
</dbReference>
<dbReference type="PANTHER" id="PTHR15004:SF0">
    <property type="entry name" value="GLUTAMYL-TRNA(GLN) AMIDOTRANSFERASE SUBUNIT C, MITOCHONDRIAL"/>
    <property type="match status" value="1"/>
</dbReference>
<dbReference type="Pfam" id="PF02686">
    <property type="entry name" value="GatC"/>
    <property type="match status" value="1"/>
</dbReference>
<dbReference type="SUPFAM" id="SSF141000">
    <property type="entry name" value="Glu-tRNAGln amidotransferase C subunit"/>
    <property type="match status" value="1"/>
</dbReference>
<sequence>MALTLADVDKIARLSRLQLTAEEKEKSLQELNDIFTMVEQMQNINTDGIEPMAHPHEVALRLREDEVTETDRAAEYQAVAPEVRNRLYIVPQVIEE</sequence>
<keyword id="KW-0067">ATP-binding</keyword>
<keyword id="KW-0436">Ligase</keyword>
<keyword id="KW-0547">Nucleotide-binding</keyword>
<keyword id="KW-0648">Protein biosynthesis</keyword>
<comment type="function">
    <text evidence="1">Allows the formation of correctly charged Asn-tRNA(Asn) or Gln-tRNA(Gln) through the transamidation of misacylated Asp-tRNA(Asn) or Glu-tRNA(Gln) in organisms which lack either or both of asparaginyl-tRNA or glutaminyl-tRNA synthetases. The reaction takes place in the presence of glutamine and ATP through an activated phospho-Asp-tRNA(Asn) or phospho-Glu-tRNA(Gln).</text>
</comment>
<comment type="catalytic activity">
    <reaction evidence="1">
        <text>L-glutamyl-tRNA(Gln) + L-glutamine + ATP + H2O = L-glutaminyl-tRNA(Gln) + L-glutamate + ADP + phosphate + H(+)</text>
        <dbReference type="Rhea" id="RHEA:17521"/>
        <dbReference type="Rhea" id="RHEA-COMP:9681"/>
        <dbReference type="Rhea" id="RHEA-COMP:9684"/>
        <dbReference type="ChEBI" id="CHEBI:15377"/>
        <dbReference type="ChEBI" id="CHEBI:15378"/>
        <dbReference type="ChEBI" id="CHEBI:29985"/>
        <dbReference type="ChEBI" id="CHEBI:30616"/>
        <dbReference type="ChEBI" id="CHEBI:43474"/>
        <dbReference type="ChEBI" id="CHEBI:58359"/>
        <dbReference type="ChEBI" id="CHEBI:78520"/>
        <dbReference type="ChEBI" id="CHEBI:78521"/>
        <dbReference type="ChEBI" id="CHEBI:456216"/>
    </reaction>
</comment>
<comment type="catalytic activity">
    <reaction evidence="1">
        <text>L-aspartyl-tRNA(Asn) + L-glutamine + ATP + H2O = L-asparaginyl-tRNA(Asn) + L-glutamate + ADP + phosphate + 2 H(+)</text>
        <dbReference type="Rhea" id="RHEA:14513"/>
        <dbReference type="Rhea" id="RHEA-COMP:9674"/>
        <dbReference type="Rhea" id="RHEA-COMP:9677"/>
        <dbReference type="ChEBI" id="CHEBI:15377"/>
        <dbReference type="ChEBI" id="CHEBI:15378"/>
        <dbReference type="ChEBI" id="CHEBI:29985"/>
        <dbReference type="ChEBI" id="CHEBI:30616"/>
        <dbReference type="ChEBI" id="CHEBI:43474"/>
        <dbReference type="ChEBI" id="CHEBI:58359"/>
        <dbReference type="ChEBI" id="CHEBI:78515"/>
        <dbReference type="ChEBI" id="CHEBI:78516"/>
        <dbReference type="ChEBI" id="CHEBI:456216"/>
    </reaction>
</comment>
<comment type="subunit">
    <text evidence="1">Heterotrimer of A, B and C subunits.</text>
</comment>
<comment type="similarity">
    <text evidence="1">Belongs to the GatC family.</text>
</comment>
<reference key="1">
    <citation type="journal article" date="2008" name="J. Bacteriol.">
        <title>Complete genome sequence of Neisseria gonorrhoeae NCCP11945.</title>
        <authorList>
            <person name="Chung G.T."/>
            <person name="Yoo J.S."/>
            <person name="Oh H.B."/>
            <person name="Lee Y.S."/>
            <person name="Cha S.H."/>
            <person name="Kim S.J."/>
            <person name="Yoo C.K."/>
        </authorList>
    </citation>
    <scope>NUCLEOTIDE SEQUENCE [LARGE SCALE GENOMIC DNA]</scope>
    <source>
        <strain>NCCP11945</strain>
    </source>
</reference>
<proteinExistence type="inferred from homology"/>
<accession>B4RM84</accession>
<organism>
    <name type="scientific">Neisseria gonorrhoeae (strain NCCP11945)</name>
    <dbReference type="NCBI Taxonomy" id="521006"/>
    <lineage>
        <taxon>Bacteria</taxon>
        <taxon>Pseudomonadati</taxon>
        <taxon>Pseudomonadota</taxon>
        <taxon>Betaproteobacteria</taxon>
        <taxon>Neisseriales</taxon>
        <taxon>Neisseriaceae</taxon>
        <taxon>Neisseria</taxon>
    </lineage>
</organism>
<gene>
    <name evidence="1" type="primary">gatC</name>
    <name type="ordered locus">NGK_1244</name>
</gene>
<feature type="chain" id="PRO_1000095300" description="Aspartyl/glutamyl-tRNA(Asn/Gln) amidotransferase subunit C">
    <location>
        <begin position="1"/>
        <end position="96"/>
    </location>
</feature>
<evidence type="ECO:0000255" key="1">
    <source>
        <dbReference type="HAMAP-Rule" id="MF_00122"/>
    </source>
</evidence>